<feature type="chain" id="PRO_1000000578" description="Thymidylate synthase">
    <location>
        <begin position="1"/>
        <end position="264"/>
    </location>
</feature>
<feature type="active site" description="Nucleophile" evidence="1">
    <location>
        <position position="146"/>
    </location>
</feature>
<feature type="binding site" description="in other chain" evidence="1">
    <location>
        <position position="21"/>
    </location>
    <ligand>
        <name>dUMP</name>
        <dbReference type="ChEBI" id="CHEBI:246422"/>
        <note>ligand shared between dimeric partners</note>
    </ligand>
</feature>
<feature type="binding site" evidence="1">
    <location>
        <position position="51"/>
    </location>
    <ligand>
        <name>(6R)-5,10-methylene-5,6,7,8-tetrahydrofolate</name>
        <dbReference type="ChEBI" id="CHEBI:15636"/>
    </ligand>
</feature>
<feature type="binding site" evidence="1">
    <location>
        <begin position="126"/>
        <end position="127"/>
    </location>
    <ligand>
        <name>dUMP</name>
        <dbReference type="ChEBI" id="CHEBI:246422"/>
        <note>ligand shared between dimeric partners</note>
    </ligand>
</feature>
<feature type="binding site" description="in other chain" evidence="1">
    <location>
        <begin position="166"/>
        <end position="169"/>
    </location>
    <ligand>
        <name>dUMP</name>
        <dbReference type="ChEBI" id="CHEBI:246422"/>
        <note>ligand shared between dimeric partners</note>
    </ligand>
</feature>
<feature type="binding site" evidence="1">
    <location>
        <position position="169"/>
    </location>
    <ligand>
        <name>(6R)-5,10-methylene-5,6,7,8-tetrahydrofolate</name>
        <dbReference type="ChEBI" id="CHEBI:15636"/>
    </ligand>
</feature>
<feature type="binding site" description="in other chain" evidence="1">
    <location>
        <position position="177"/>
    </location>
    <ligand>
        <name>dUMP</name>
        <dbReference type="ChEBI" id="CHEBI:246422"/>
        <note>ligand shared between dimeric partners</note>
    </ligand>
</feature>
<feature type="binding site" description="in other chain" evidence="1">
    <location>
        <begin position="207"/>
        <end position="209"/>
    </location>
    <ligand>
        <name>dUMP</name>
        <dbReference type="ChEBI" id="CHEBI:246422"/>
        <note>ligand shared between dimeric partners</note>
    </ligand>
</feature>
<feature type="binding site" evidence="1">
    <location>
        <position position="263"/>
    </location>
    <ligand>
        <name>(6R)-5,10-methylene-5,6,7,8-tetrahydrofolate</name>
        <dbReference type="ChEBI" id="CHEBI:15636"/>
    </ligand>
</feature>
<reference key="1">
    <citation type="journal article" date="2007" name="PLoS Biol.">
        <title>Evolution of symbiotic bacteria in the distal human intestine.</title>
        <authorList>
            <person name="Xu J."/>
            <person name="Mahowald M.A."/>
            <person name="Ley R.E."/>
            <person name="Lozupone C.A."/>
            <person name="Hamady M."/>
            <person name="Martens E.C."/>
            <person name="Henrissat B."/>
            <person name="Coutinho P.M."/>
            <person name="Minx P."/>
            <person name="Latreille P."/>
            <person name="Cordum H."/>
            <person name="Van Brunt A."/>
            <person name="Kim K."/>
            <person name="Fulton R.S."/>
            <person name="Fulton L.A."/>
            <person name="Clifton S.W."/>
            <person name="Wilson R.K."/>
            <person name="Knight R.D."/>
            <person name="Gordon J.I."/>
        </authorList>
    </citation>
    <scope>NUCLEOTIDE SEQUENCE [LARGE SCALE GENOMIC DNA]</scope>
    <source>
        <strain>ATCC 8482 / DSM 1447 / JCM 5826 / CCUG 4940 / NBRC 14291 / NCTC 11154</strain>
    </source>
</reference>
<sequence>MKQYLDLLNRILTEGVHKEDRTGTGTISVFGHQMRFNLEEGFPLVTTKKLHLKSIIHELLWFLQGDTNVKYLQDNGVRIWNEWADANGDLGHIYGYQWRSWPDYNGGFIDQISEAIETIKHNPDSRRIIVSAWNVADLNNMNLPPCHAFFQFYVANGRLSLQLYQRSADTFLGVPFNIASYALLLQMVAQVTGLQTGDFVHTLGDTHIYTNHLEQVKLQLSREPRPLPQMKINPDIKDIFSFKYEDFELVNYDPWPHIAGKVSV</sequence>
<protein>
    <recommendedName>
        <fullName evidence="1">Thymidylate synthase</fullName>
        <shortName evidence="1">TS</shortName>
        <shortName evidence="1">TSase</shortName>
        <ecNumber evidence="1">2.1.1.45</ecNumber>
    </recommendedName>
</protein>
<accession>A6L1Q8</accession>
<dbReference type="EC" id="2.1.1.45" evidence="1"/>
<dbReference type="EMBL" id="CP000139">
    <property type="protein sequence ID" value="ABR39622.1"/>
    <property type="molecule type" value="Genomic_DNA"/>
</dbReference>
<dbReference type="RefSeq" id="WP_011965387.1">
    <property type="nucleotide sequence ID" value="NZ_JANSWM010000118.1"/>
</dbReference>
<dbReference type="SMR" id="A6L1Q8"/>
<dbReference type="STRING" id="435590.BVU_1950"/>
<dbReference type="PaxDb" id="435590-BVU_1950"/>
<dbReference type="GeneID" id="5302916"/>
<dbReference type="KEGG" id="bvu:BVU_1950"/>
<dbReference type="eggNOG" id="COG0207">
    <property type="taxonomic scope" value="Bacteria"/>
</dbReference>
<dbReference type="HOGENOM" id="CLU_021669_0_0_10"/>
<dbReference type="BioCyc" id="BVUL435590:G1G59-2042-MONOMER"/>
<dbReference type="UniPathway" id="UPA00575"/>
<dbReference type="Proteomes" id="UP000002861">
    <property type="component" value="Chromosome"/>
</dbReference>
<dbReference type="GO" id="GO:0005829">
    <property type="term" value="C:cytosol"/>
    <property type="evidence" value="ECO:0007669"/>
    <property type="project" value="TreeGrafter"/>
</dbReference>
<dbReference type="GO" id="GO:0004799">
    <property type="term" value="F:thymidylate synthase activity"/>
    <property type="evidence" value="ECO:0007669"/>
    <property type="project" value="UniProtKB-UniRule"/>
</dbReference>
<dbReference type="GO" id="GO:0006231">
    <property type="term" value="P:dTMP biosynthetic process"/>
    <property type="evidence" value="ECO:0007669"/>
    <property type="project" value="UniProtKB-UniRule"/>
</dbReference>
<dbReference type="GO" id="GO:0006235">
    <property type="term" value="P:dTTP biosynthetic process"/>
    <property type="evidence" value="ECO:0007669"/>
    <property type="project" value="UniProtKB-UniRule"/>
</dbReference>
<dbReference type="GO" id="GO:0032259">
    <property type="term" value="P:methylation"/>
    <property type="evidence" value="ECO:0007669"/>
    <property type="project" value="UniProtKB-KW"/>
</dbReference>
<dbReference type="CDD" id="cd00351">
    <property type="entry name" value="TS_Pyrimidine_HMase"/>
    <property type="match status" value="1"/>
</dbReference>
<dbReference type="FunFam" id="3.30.572.10:FF:000001">
    <property type="entry name" value="Thymidylate synthase"/>
    <property type="match status" value="1"/>
</dbReference>
<dbReference type="Gene3D" id="3.30.572.10">
    <property type="entry name" value="Thymidylate synthase/dCMP hydroxymethylase domain"/>
    <property type="match status" value="1"/>
</dbReference>
<dbReference type="HAMAP" id="MF_00008">
    <property type="entry name" value="Thymidy_synth_bact"/>
    <property type="match status" value="1"/>
</dbReference>
<dbReference type="InterPro" id="IPR045097">
    <property type="entry name" value="Thymidate_synth/dCMP_Mease"/>
</dbReference>
<dbReference type="InterPro" id="IPR023451">
    <property type="entry name" value="Thymidate_synth/dCMP_Mease_dom"/>
</dbReference>
<dbReference type="InterPro" id="IPR036926">
    <property type="entry name" value="Thymidate_synth/dCMP_Mease_sf"/>
</dbReference>
<dbReference type="InterPro" id="IPR000398">
    <property type="entry name" value="Thymidylate_synthase"/>
</dbReference>
<dbReference type="InterPro" id="IPR020940">
    <property type="entry name" value="Thymidylate_synthase_AS"/>
</dbReference>
<dbReference type="NCBIfam" id="NF002497">
    <property type="entry name" value="PRK01827.1-3"/>
    <property type="match status" value="1"/>
</dbReference>
<dbReference type="NCBIfam" id="NF002499">
    <property type="entry name" value="PRK01827.1-5"/>
    <property type="match status" value="1"/>
</dbReference>
<dbReference type="NCBIfam" id="TIGR03284">
    <property type="entry name" value="thym_sym"/>
    <property type="match status" value="2"/>
</dbReference>
<dbReference type="PANTHER" id="PTHR11548:SF9">
    <property type="entry name" value="THYMIDYLATE SYNTHASE"/>
    <property type="match status" value="1"/>
</dbReference>
<dbReference type="PANTHER" id="PTHR11548">
    <property type="entry name" value="THYMIDYLATE SYNTHASE 1"/>
    <property type="match status" value="1"/>
</dbReference>
<dbReference type="Pfam" id="PF00303">
    <property type="entry name" value="Thymidylat_synt"/>
    <property type="match status" value="1"/>
</dbReference>
<dbReference type="PRINTS" id="PR00108">
    <property type="entry name" value="THYMDSNTHASE"/>
</dbReference>
<dbReference type="SUPFAM" id="SSF55831">
    <property type="entry name" value="Thymidylate synthase/dCMP hydroxymethylase"/>
    <property type="match status" value="1"/>
</dbReference>
<dbReference type="PROSITE" id="PS00091">
    <property type="entry name" value="THYMIDYLATE_SYNTHASE"/>
    <property type="match status" value="1"/>
</dbReference>
<comment type="function">
    <text evidence="1">Catalyzes the reductive methylation of 2'-deoxyuridine-5'-monophosphate (dUMP) to 2'-deoxythymidine-5'-monophosphate (dTMP) while utilizing 5,10-methylenetetrahydrofolate (mTHF) as the methyl donor and reductant in the reaction, yielding dihydrofolate (DHF) as a by-product. This enzymatic reaction provides an intracellular de novo source of dTMP, an essential precursor for DNA biosynthesis.</text>
</comment>
<comment type="catalytic activity">
    <reaction evidence="1">
        <text>dUMP + (6R)-5,10-methylene-5,6,7,8-tetrahydrofolate = 7,8-dihydrofolate + dTMP</text>
        <dbReference type="Rhea" id="RHEA:12104"/>
        <dbReference type="ChEBI" id="CHEBI:15636"/>
        <dbReference type="ChEBI" id="CHEBI:57451"/>
        <dbReference type="ChEBI" id="CHEBI:63528"/>
        <dbReference type="ChEBI" id="CHEBI:246422"/>
        <dbReference type="EC" id="2.1.1.45"/>
    </reaction>
</comment>
<comment type="pathway">
    <text evidence="1">Pyrimidine metabolism; dTTP biosynthesis.</text>
</comment>
<comment type="subunit">
    <text evidence="1">Homodimer.</text>
</comment>
<comment type="subcellular location">
    <subcellularLocation>
        <location evidence="1">Cytoplasm</location>
    </subcellularLocation>
</comment>
<comment type="similarity">
    <text evidence="1">Belongs to the thymidylate synthase family. Bacterial-type ThyA subfamily.</text>
</comment>
<gene>
    <name evidence="1" type="primary">thyA</name>
    <name type="ordered locus">BVU_1950</name>
</gene>
<organism>
    <name type="scientific">Phocaeicola vulgatus (strain ATCC 8482 / DSM 1447 / JCM 5826 / CCUG 4940 / NBRC 14291 / NCTC 11154)</name>
    <name type="common">Bacteroides vulgatus</name>
    <dbReference type="NCBI Taxonomy" id="435590"/>
    <lineage>
        <taxon>Bacteria</taxon>
        <taxon>Pseudomonadati</taxon>
        <taxon>Bacteroidota</taxon>
        <taxon>Bacteroidia</taxon>
        <taxon>Bacteroidales</taxon>
        <taxon>Bacteroidaceae</taxon>
        <taxon>Phocaeicola</taxon>
    </lineage>
</organism>
<keyword id="KW-0963">Cytoplasm</keyword>
<keyword id="KW-0489">Methyltransferase</keyword>
<keyword id="KW-0545">Nucleotide biosynthesis</keyword>
<keyword id="KW-0808">Transferase</keyword>
<proteinExistence type="inferred from homology"/>
<name>TYSY_PHOV8</name>
<evidence type="ECO:0000255" key="1">
    <source>
        <dbReference type="HAMAP-Rule" id="MF_00008"/>
    </source>
</evidence>